<accession>P21334</accession>
<accession>Q7RVL2</accession>
<name>CRTI_NEUCR</name>
<reference key="1">
    <citation type="journal article" date="1990" name="Mol. Cell. Biol.">
        <title>Cloning, sequence, and photoregulation of al-1, a carotenoid biosynthetic gene of Neurospora crassa.</title>
        <authorList>
            <person name="Schmidhauser T.J."/>
            <person name="Lauter F.-R."/>
            <person name="Russo V.E.A."/>
            <person name="Yanofsky C."/>
        </authorList>
    </citation>
    <scope>NUCLEOTIDE SEQUENCE [GENOMIC DNA]</scope>
    <scope>FUNCTION</scope>
    <scope>INDUCTION</scope>
    <source>
        <strain>ATCC 24698 / 74-OR23-1A / CBS 708.71 / DSM 1257 / FGSC 987</strain>
    </source>
</reference>
<reference key="2">
    <citation type="journal article" date="2003" name="Nature">
        <title>The genome sequence of the filamentous fungus Neurospora crassa.</title>
        <authorList>
            <person name="Galagan J.E."/>
            <person name="Calvo S.E."/>
            <person name="Borkovich K.A."/>
            <person name="Selker E.U."/>
            <person name="Read N.D."/>
            <person name="Jaffe D.B."/>
            <person name="FitzHugh W."/>
            <person name="Ma L.-J."/>
            <person name="Smirnov S."/>
            <person name="Purcell S."/>
            <person name="Rehman B."/>
            <person name="Elkins T."/>
            <person name="Engels R."/>
            <person name="Wang S."/>
            <person name="Nielsen C.B."/>
            <person name="Butler J."/>
            <person name="Endrizzi M."/>
            <person name="Qui D."/>
            <person name="Ianakiev P."/>
            <person name="Bell-Pedersen D."/>
            <person name="Nelson M.A."/>
            <person name="Werner-Washburne M."/>
            <person name="Selitrennikoff C.P."/>
            <person name="Kinsey J.A."/>
            <person name="Braun E.L."/>
            <person name="Zelter A."/>
            <person name="Schulte U."/>
            <person name="Kothe G.O."/>
            <person name="Jedd G."/>
            <person name="Mewes H.-W."/>
            <person name="Staben C."/>
            <person name="Marcotte E."/>
            <person name="Greenberg D."/>
            <person name="Roy A."/>
            <person name="Foley K."/>
            <person name="Naylor J."/>
            <person name="Stange-Thomann N."/>
            <person name="Barrett R."/>
            <person name="Gnerre S."/>
            <person name="Kamal M."/>
            <person name="Kamvysselis M."/>
            <person name="Mauceli E.W."/>
            <person name="Bielke C."/>
            <person name="Rudd S."/>
            <person name="Frishman D."/>
            <person name="Krystofova S."/>
            <person name="Rasmussen C."/>
            <person name="Metzenberg R.L."/>
            <person name="Perkins D.D."/>
            <person name="Kroken S."/>
            <person name="Cogoni C."/>
            <person name="Macino G."/>
            <person name="Catcheside D.E.A."/>
            <person name="Li W."/>
            <person name="Pratt R.J."/>
            <person name="Osmani S.A."/>
            <person name="DeSouza C.P.C."/>
            <person name="Glass N.L."/>
            <person name="Orbach M.J."/>
            <person name="Berglund J.A."/>
            <person name="Voelker R."/>
            <person name="Yarden O."/>
            <person name="Plamann M."/>
            <person name="Seiler S."/>
            <person name="Dunlap J.C."/>
            <person name="Radford A."/>
            <person name="Aramayo R."/>
            <person name="Natvig D.O."/>
            <person name="Alex L.A."/>
            <person name="Mannhaupt G."/>
            <person name="Ebbole D.J."/>
            <person name="Freitag M."/>
            <person name="Paulsen I."/>
            <person name="Sachs M.S."/>
            <person name="Lander E.S."/>
            <person name="Nusbaum C."/>
            <person name="Birren B.W."/>
        </authorList>
    </citation>
    <scope>NUCLEOTIDE SEQUENCE [LARGE SCALE GENOMIC DNA]</scope>
    <source>
        <strain>ATCC 24698 / 74-OR23-1A / CBS 708.71 / DSM 1257 / FGSC 987</strain>
    </source>
</reference>
<reference key="3">
    <citation type="journal article" date="2000" name="Fungal Genet. Biol.">
        <title>A single five-step desaturase is involved in the carotenoid biosynthesis pathway to beta-carotene and torulene in Neurospora crassa.</title>
        <authorList>
            <person name="Hausmann A."/>
            <person name="Sandmann G."/>
        </authorList>
    </citation>
    <scope>FUNCTION</scope>
    <scope>COFACTOR</scope>
    <scope>CATALYTIC ACTIVITY</scope>
    <scope>BIOPHYSICOCHEMICAL PROPERTIES</scope>
    <scope>SUBSTRATE SPECIFICITY</scope>
</reference>
<reference key="4">
    <citation type="journal article" date="2008" name="Fungal Genet. Biol.">
        <title>Novel apocarotenoid intermediates in Neurospora crassa mutants imply a new biosynthetic reaction sequence leading to neurosporaxanthin formation.</title>
        <authorList>
            <person name="Estrada A.F."/>
            <person name="Maier D."/>
            <person name="Scherzinger D."/>
            <person name="Avalos J."/>
            <person name="Al-Babili S."/>
        </authorList>
    </citation>
    <scope>FUNCTION</scope>
</reference>
<gene>
    <name evidence="6" type="primary">al-1</name>
    <name type="ORF">NCU00552</name>
</gene>
<protein>
    <recommendedName>
        <fullName evidence="5">Phytoene desaturase</fullName>
        <ecNumber evidence="2">1.3.99.-</ecNumber>
    </recommendedName>
    <alternativeName>
        <fullName evidence="6">Albino-1 protein</fullName>
    </alternativeName>
    <alternativeName>
        <fullName evidence="5">Phytoene desaturase (3,4-didehydrolycopene-forming)</fullName>
    </alternativeName>
</protein>
<organism>
    <name type="scientific">Neurospora crassa (strain ATCC 24698 / 74-OR23-1A / CBS 708.71 / DSM 1257 / FGSC 987)</name>
    <dbReference type="NCBI Taxonomy" id="367110"/>
    <lineage>
        <taxon>Eukaryota</taxon>
        <taxon>Fungi</taxon>
        <taxon>Dikarya</taxon>
        <taxon>Ascomycota</taxon>
        <taxon>Pezizomycotina</taxon>
        <taxon>Sordariomycetes</taxon>
        <taxon>Sordariomycetidae</taxon>
        <taxon>Sordariales</taxon>
        <taxon>Sordariaceae</taxon>
        <taxon>Neurospora</taxon>
    </lineage>
</organism>
<evidence type="ECO:0000255" key="1"/>
<evidence type="ECO:0000269" key="2">
    <source>
    </source>
</evidence>
<evidence type="ECO:0000269" key="3">
    <source>
    </source>
</evidence>
<evidence type="ECO:0000269" key="4">
    <source>
    </source>
</evidence>
<evidence type="ECO:0000303" key="5">
    <source>
    </source>
</evidence>
<evidence type="ECO:0000303" key="6">
    <source>
    </source>
</evidence>
<evidence type="ECO:0000305" key="7"/>
<evidence type="ECO:0000305" key="8">
    <source>
    </source>
</evidence>
<feature type="signal peptide" evidence="1">
    <location>
        <begin position="1"/>
        <end position="23"/>
    </location>
</feature>
<feature type="chain" id="PRO_0000067695" description="Phytoene desaturase">
    <location>
        <begin position="24"/>
        <end position="595"/>
    </location>
</feature>
<feature type="transmembrane region" description="Helical" evidence="1">
    <location>
        <begin position="574"/>
        <end position="594"/>
    </location>
</feature>
<keyword id="KW-0125">Carotenoid biosynthesis</keyword>
<keyword id="KW-0472">Membrane</keyword>
<keyword id="KW-0520">NAD</keyword>
<keyword id="KW-0560">Oxidoreductase</keyword>
<keyword id="KW-1185">Reference proteome</keyword>
<keyword id="KW-0732">Signal</keyword>
<keyword id="KW-0812">Transmembrane</keyword>
<keyword id="KW-1133">Transmembrane helix</keyword>
<comment type="function">
    <text evidence="2 3 4 8">Phytoene desaturase involved in the carotenoid biosynthesis pathway (PubMed:11017770, PubMed:18812228, PubMed:2144609). Converts phytoene into 3,4-didehydrolycopene via the intermediates phytofluene, zeta-carotene, neurosporene and lycopene, by introducing up to five double bonds into phytoene (PubMed:11017770, PubMed:18812228). Is also able to desaturate 1-hydroxyneurosporene into 1-hydroxylycopene and 1-hydroxylycopene into 1-hydroxy-3,4-didehydrolycopene (PubMed:11017770). Gamma-carotene and 1,19-dihydroxylycopene are not accepted as substrates (PubMed:11017770). Neurosporaxanthin is synthesized from geranyl-geranyl pyrophosphate (GGPP) through several enzymatic activities. Phytoene synthase activity performed by the bifunctional enzyme al-2 first produces phytoene from geranyl-geranyl pyrophosphate (GGPP). The phytoene dehydrogenase al-1 then introduces 5 desaturations to lead to 3,4-didehydrolycopene via the intermediates phytofluene, zeta-carotene, neurosporene and lycopene. Al-2 cyclase activity then converts 3,4-didehydrolycopene into torulene. Al-2 can also convet lycopene into gamma-carotene which in turn is converted to beta-carotene by an additional al-2 cyclization reaction. Torulene is the substrate of the dioxidase cao-2 that breaks the molecule, removing five carbon atoms to yield beta-apo-4'-carotenal, whereas the aldehyde dehydrogenase ylo-1 mediates the last step by converting beta-apo-4'-carotenal into neurosporaxanthin (Probable).</text>
</comment>
<comment type="catalytic activity">
    <reaction evidence="2">
        <text>15-cis-phytoene + A = all-trans-phytofluene + AH2</text>
        <dbReference type="Rhea" id="RHEA:30603"/>
        <dbReference type="ChEBI" id="CHEBI:13193"/>
        <dbReference type="ChEBI" id="CHEBI:17499"/>
        <dbReference type="ChEBI" id="CHEBI:27787"/>
        <dbReference type="ChEBI" id="CHEBI:28129"/>
    </reaction>
    <physiologicalReaction direction="left-to-right" evidence="2">
        <dbReference type="Rhea" id="RHEA:30604"/>
    </physiologicalReaction>
</comment>
<comment type="catalytic activity">
    <reaction evidence="2">
        <text>all-trans-phytofluene + A = all-trans-zeta-carotene + AH2</text>
        <dbReference type="Rhea" id="RHEA:30607"/>
        <dbReference type="ChEBI" id="CHEBI:13193"/>
        <dbReference type="ChEBI" id="CHEBI:17499"/>
        <dbReference type="ChEBI" id="CHEBI:28068"/>
        <dbReference type="ChEBI" id="CHEBI:28129"/>
    </reaction>
    <physiologicalReaction direction="left-to-right" evidence="2">
        <dbReference type="Rhea" id="RHEA:30608"/>
    </physiologicalReaction>
</comment>
<comment type="catalytic activity">
    <reaction evidence="2">
        <text>all-trans-zeta-carotene + A = all-trans-neurosporene + AH2</text>
        <dbReference type="Rhea" id="RHEA:30611"/>
        <dbReference type="ChEBI" id="CHEBI:13193"/>
        <dbReference type="ChEBI" id="CHEBI:16833"/>
        <dbReference type="ChEBI" id="CHEBI:17499"/>
        <dbReference type="ChEBI" id="CHEBI:28068"/>
    </reaction>
    <physiologicalReaction direction="left-to-right" evidence="2">
        <dbReference type="Rhea" id="RHEA:30612"/>
    </physiologicalReaction>
</comment>
<comment type="catalytic activity">
    <reaction evidence="2">
        <text>all-trans-neurosporene + A = all-trans-lycopene + AH2</text>
        <dbReference type="Rhea" id="RHEA:30623"/>
        <dbReference type="ChEBI" id="CHEBI:13193"/>
        <dbReference type="ChEBI" id="CHEBI:15948"/>
        <dbReference type="ChEBI" id="CHEBI:16833"/>
        <dbReference type="ChEBI" id="CHEBI:17499"/>
    </reaction>
    <physiologicalReaction direction="left-to-right" evidence="2">
        <dbReference type="Rhea" id="RHEA:30624"/>
    </physiologicalReaction>
</comment>
<comment type="catalytic activity">
    <reaction evidence="2">
        <text>all-trans-lycopene + A = all-trans-3,4-didehydrolycopene + AH2</text>
        <dbReference type="Rhea" id="RHEA:30979"/>
        <dbReference type="ChEBI" id="CHEBI:13193"/>
        <dbReference type="ChEBI" id="CHEBI:15948"/>
        <dbReference type="ChEBI" id="CHEBI:17499"/>
        <dbReference type="ChEBI" id="CHEBI:62474"/>
    </reaction>
    <physiologicalReaction direction="left-to-right" evidence="2">
        <dbReference type="Rhea" id="RHEA:30980"/>
    </physiologicalReaction>
</comment>
<comment type="cofactor">
    <cofactor evidence="2">
        <name>NAD(+)</name>
        <dbReference type="ChEBI" id="CHEBI:57540"/>
    </cofactor>
</comment>
<comment type="biophysicochemical properties">
    <kinetics>
        <KM evidence="2">30 uM for phytoene</KM>
        <KM evidence="2">32 uM for lycopene</KM>
    </kinetics>
</comment>
<comment type="pathway">
    <text evidence="2">Carotenoid biosynthesis; lycopene biosynthesis.</text>
</comment>
<comment type="subcellular location">
    <subcellularLocation>
        <location evidence="7">Membrane</location>
        <topology evidence="7">Single-pass membrane protein</topology>
    </subcellularLocation>
</comment>
<comment type="induction">
    <text evidence="4">The expression is subject to photoinduction.</text>
</comment>
<comment type="similarity">
    <text evidence="7">Belongs to the carotenoid/retinoid oxidoreductase family.</text>
</comment>
<proteinExistence type="evidence at protein level"/>
<sequence>MAETQRPRSAIIVGAGAGGIAVAARLAKAGVDVTVLEKNDFTGGRCSLIHTKAGYRFDQGPSLLLLPGLFRETFEDLGTTLEQEDVELLQCFPNYNIWFSDGKRFSPTTDNATMKVEIEKWEGPDGFRRYLSWLAEGHQHYETSLRHVLHRNFKSILELADPRLVVTLLMALHPFESIWHRAGRYFKTDRMQRVFTFATMYMGMSPFDAPATYSLLQYSELAEGIWYPRGGFHKVLDALVKIGERMGVKYRLNTGVSQVLTDGGKNGKKPKATGVQLENGEVLNADLVVVNADLVYTYNNLLPKEIGGIKKYANKLNNRKASCSSISFYWSLSGMAKELETHNIFLAEEYKESFDAIFERQALPDDPSFYIHVPSRVDPSAAPPDRDAVIALVPVGHLLQNGQPELDWPTLVSKARAGVLATIQARTGLSLSPLITEEIVNTPYTWETKFNLSKGAILGLAHDFFNVLAFRPRTKAQGMDNAYFVGASTHPGTGVPIVLAGAKITAEQILEETFPKNTKVPWTTNEERNSERMRKEMDEKITEEGIIMRSNSSKPGRRGSDAFEGAMEVVNLLSQRAFPLLVALMGVLYFLLFVR</sequence>
<dbReference type="EC" id="1.3.99.-" evidence="2"/>
<dbReference type="EMBL" id="M57465">
    <property type="protein sequence ID" value="AAA33555.1"/>
    <property type="molecule type" value="Genomic_DNA"/>
</dbReference>
<dbReference type="EMBL" id="CM002236">
    <property type="protein sequence ID" value="EAA35477.1"/>
    <property type="molecule type" value="Genomic_DNA"/>
</dbReference>
<dbReference type="PIR" id="A35919">
    <property type="entry name" value="A35919"/>
</dbReference>
<dbReference type="RefSeq" id="XP_964713.1">
    <property type="nucleotide sequence ID" value="XM_959620.2"/>
</dbReference>
<dbReference type="SMR" id="P21334"/>
<dbReference type="STRING" id="367110.P21334"/>
<dbReference type="PaxDb" id="5141-EFNCRP00000000637"/>
<dbReference type="EnsemblFungi" id="EAA35477">
    <property type="protein sequence ID" value="EAA35477"/>
    <property type="gene ID" value="NCU00552"/>
</dbReference>
<dbReference type="GeneID" id="3880862"/>
<dbReference type="KEGG" id="ncr:NCU00552"/>
<dbReference type="VEuPathDB" id="FungiDB:NCU00552"/>
<dbReference type="HOGENOM" id="CLU_019722_2_1_1"/>
<dbReference type="InParanoid" id="P21334"/>
<dbReference type="OrthoDB" id="7777654at2759"/>
<dbReference type="BioCyc" id="MetaCyc:MONOMER-16128"/>
<dbReference type="UniPathway" id="UPA00803"/>
<dbReference type="Proteomes" id="UP000001805">
    <property type="component" value="Chromosome 1, Linkage Group I"/>
</dbReference>
<dbReference type="GO" id="GO:0016020">
    <property type="term" value="C:membrane"/>
    <property type="evidence" value="ECO:0007669"/>
    <property type="project" value="UniProtKB-SubCell"/>
</dbReference>
<dbReference type="GO" id="GO:0016166">
    <property type="term" value="F:phytoene dehydrogenase activity"/>
    <property type="evidence" value="ECO:0000314"/>
    <property type="project" value="UniProt"/>
</dbReference>
<dbReference type="GO" id="GO:0016117">
    <property type="term" value="P:carotenoid biosynthetic process"/>
    <property type="evidence" value="ECO:0000314"/>
    <property type="project" value="UniProt"/>
</dbReference>
<dbReference type="FunFam" id="3.50.50.60:FF:000171">
    <property type="entry name" value="zeta-carotene-forming phytoene desaturase"/>
    <property type="match status" value="1"/>
</dbReference>
<dbReference type="Gene3D" id="3.50.50.60">
    <property type="entry name" value="FAD/NAD(P)-binding domain"/>
    <property type="match status" value="2"/>
</dbReference>
<dbReference type="InterPro" id="IPR002937">
    <property type="entry name" value="Amino_oxidase"/>
</dbReference>
<dbReference type="InterPro" id="IPR014105">
    <property type="entry name" value="Carotenoid/retinoid_OxRdtase"/>
</dbReference>
<dbReference type="InterPro" id="IPR036188">
    <property type="entry name" value="FAD/NAD-bd_sf"/>
</dbReference>
<dbReference type="InterPro" id="IPR008150">
    <property type="entry name" value="Phytoene_DH_bac_CS"/>
</dbReference>
<dbReference type="NCBIfam" id="TIGR02734">
    <property type="entry name" value="crtI_fam"/>
    <property type="match status" value="1"/>
</dbReference>
<dbReference type="PANTHER" id="PTHR43734">
    <property type="entry name" value="PHYTOENE DESATURASE"/>
    <property type="match status" value="1"/>
</dbReference>
<dbReference type="PANTHER" id="PTHR43734:SF1">
    <property type="entry name" value="PHYTOENE DESATURASE"/>
    <property type="match status" value="1"/>
</dbReference>
<dbReference type="Pfam" id="PF01593">
    <property type="entry name" value="Amino_oxidase"/>
    <property type="match status" value="1"/>
</dbReference>
<dbReference type="SUPFAM" id="SSF51905">
    <property type="entry name" value="FAD/NAD(P)-binding domain"/>
    <property type="match status" value="1"/>
</dbReference>
<dbReference type="PROSITE" id="PS00982">
    <property type="entry name" value="PHYTOENE_DH"/>
    <property type="match status" value="1"/>
</dbReference>